<proteinExistence type="inferred from homology"/>
<accession>O87627</accession>
<feature type="chain" id="PRO_0000153128" description="Nitrogenase iron-molybdenum cofactor biosynthesis protein NifN">
    <location>
        <begin position="1"/>
        <end position="443"/>
    </location>
</feature>
<feature type="binding site" evidence="1">
    <location>
        <position position="42"/>
    </location>
    <ligand>
        <name>[7Fe-Mo-9S-C-homocitryl] cluster</name>
        <dbReference type="ChEBI" id="CHEBI:30409"/>
        <note>cofactor</note>
    </ligand>
</feature>
<protein>
    <recommendedName>
        <fullName>Nitrogenase iron-molybdenum cofactor biosynthesis protein NifN</fullName>
    </recommendedName>
</protein>
<reference key="1">
    <citation type="journal article" date="1999" name="FEMS Microbiol. Lett.">
        <title>Sequencing and functional analysis of the nifENXorf1orf2 gene cluster of Herbaspirillum seropedicae.</title>
        <authorList>
            <person name="Klassen G."/>
            <person name="Pedrosa F.O."/>
            <person name="Souza E.M."/>
            <person name="Yates M.G."/>
            <person name="Rigo L.U."/>
        </authorList>
    </citation>
    <scope>NUCLEOTIDE SEQUENCE [GENOMIC DNA]</scope>
    <source>
        <strain>ATCC 35893 / DSM 6446 / LMG 6514 / Z78</strain>
    </source>
</reference>
<keyword id="KW-0479">Metal-binding</keyword>
<keyword id="KW-0535">Nitrogen fixation</keyword>
<organism>
    <name type="scientific">Herbaspirillum seropedicae</name>
    <dbReference type="NCBI Taxonomy" id="964"/>
    <lineage>
        <taxon>Bacteria</taxon>
        <taxon>Pseudomonadati</taxon>
        <taxon>Pseudomonadota</taxon>
        <taxon>Betaproteobacteria</taxon>
        <taxon>Burkholderiales</taxon>
        <taxon>Oxalobacteraceae</taxon>
        <taxon>Herbaspirillum</taxon>
    </lineage>
</organism>
<sequence>MPSASLLKAAAVNALKMSQVGRGLCLPGMNRYMPVMHGAQGCTSFGLVLLVRDFREAIPLQTTAMNEVSSTLGGMENIAKAVLNIRLRAKRDLIAICSTGLTETKGDDVNAYLRLTAEAPRPGRYLTGLCPHALTTGASQDGWAKALEALAGRWESRGRADARQADNLLAGCHLTPADIEEMRDIVQSFGLEPIVLPDVSSWLDGHLPDNFSPTSMGGTTLAEMRALGASIVCIANRRTEAPPTAQAVQELCGVPYVVFDRLTGLQANDRFLAYLEYVSGQPIPARYRRQRSQLQDAMLGWPLLLRPGVKVAIGAEPEPVAVTLRHGWPRWAAELGGCRDHHDLAGARWRSPQPGWWIGANLEAPGTKGARARACAGSCWLTHSHGGQAAERLHIPFHRAGLPPCSTGLGAGHCLSVGYRGTRGLIFEIGQPVAGRGPCTYPG</sequence>
<comment type="function">
    <text>This protein may play a role in the biosynthesis of the prosthetic group of nitrogenase (FeMo cofactor).</text>
</comment>
<comment type="pathway">
    <text>Cofactor biosynthesis; Fe-Mo cofactor biosynthesis.</text>
</comment>
<comment type="similarity">
    <text evidence="2">Belongs to the NifD/NifK/NifE/NifN family.</text>
</comment>
<evidence type="ECO:0000255" key="1"/>
<evidence type="ECO:0000305" key="2"/>
<name>NIFN_HERSE</name>
<gene>
    <name type="primary">nifN</name>
</gene>
<dbReference type="EMBL" id="AF088132">
    <property type="protein sequence ID" value="AAC43020.1"/>
    <property type="molecule type" value="Genomic_DNA"/>
</dbReference>
<dbReference type="SMR" id="O87627"/>
<dbReference type="UniPathway" id="UPA00782"/>
<dbReference type="GO" id="GO:0046872">
    <property type="term" value="F:metal ion binding"/>
    <property type="evidence" value="ECO:0007669"/>
    <property type="project" value="UniProtKB-KW"/>
</dbReference>
<dbReference type="GO" id="GO:0016163">
    <property type="term" value="F:nitrogenase activity"/>
    <property type="evidence" value="ECO:0007669"/>
    <property type="project" value="InterPro"/>
</dbReference>
<dbReference type="GO" id="GO:0009399">
    <property type="term" value="P:nitrogen fixation"/>
    <property type="evidence" value="ECO:0007669"/>
    <property type="project" value="UniProtKB-KW"/>
</dbReference>
<dbReference type="Gene3D" id="6.10.250.1090">
    <property type="match status" value="1"/>
</dbReference>
<dbReference type="Gene3D" id="3.40.50.1980">
    <property type="entry name" value="Nitrogenase molybdenum iron protein domain"/>
    <property type="match status" value="3"/>
</dbReference>
<dbReference type="InterPro" id="IPR050152">
    <property type="entry name" value="ChlB/BchB/BchZ"/>
</dbReference>
<dbReference type="InterPro" id="IPR000510">
    <property type="entry name" value="Nase/OxRdtase_comp1"/>
</dbReference>
<dbReference type="InterPro" id="IPR000318">
    <property type="entry name" value="Nase_comp1_CS"/>
</dbReference>
<dbReference type="PANTHER" id="PTHR33712">
    <property type="entry name" value="LIGHT-INDEPENDENT PROTOCHLOROPHYLLIDE REDUCTASE SUBUNIT B"/>
    <property type="match status" value="1"/>
</dbReference>
<dbReference type="PANTHER" id="PTHR33712:SF7">
    <property type="entry name" value="LIGHT-INDEPENDENT PROTOCHLOROPHYLLIDE REDUCTASE SUBUNIT B"/>
    <property type="match status" value="1"/>
</dbReference>
<dbReference type="Pfam" id="PF00148">
    <property type="entry name" value="Oxidored_nitro"/>
    <property type="match status" value="1"/>
</dbReference>
<dbReference type="SUPFAM" id="SSF53807">
    <property type="entry name" value="Helical backbone' metal receptor"/>
    <property type="match status" value="1"/>
</dbReference>
<dbReference type="PROSITE" id="PS00699">
    <property type="entry name" value="NITROGENASE_1_1"/>
    <property type="match status" value="1"/>
</dbReference>